<protein>
    <recommendedName>
        <fullName evidence="14">Cocaine esterase</fullName>
        <ecNumber evidence="11">3.1.1.84</ecNumber>
    </recommendedName>
    <alternativeName>
        <fullName>Carboxylesterase 2</fullName>
        <shortName>CE-2</shortName>
        <shortName>hCE-2</shortName>
        <ecNumber evidence="11">3.1.1.1</ecNumber>
    </alternativeName>
    <alternativeName>
        <fullName>Methylumbelliferyl-acetate deacetylase 2</fullName>
        <ecNumber>3.1.1.56</ecNumber>
    </alternativeName>
</protein>
<dbReference type="EC" id="3.1.1.84" evidence="11"/>
<dbReference type="EC" id="3.1.1.1" evidence="11"/>
<dbReference type="EC" id="3.1.1.56"/>
<dbReference type="EMBL" id="Y09616">
    <property type="protein sequence ID" value="CAA70831.1"/>
    <property type="molecule type" value="mRNA"/>
</dbReference>
<dbReference type="EMBL" id="D50579">
    <property type="protein sequence ID" value="BAA23606.1"/>
    <property type="molecule type" value="mRNA"/>
</dbReference>
<dbReference type="EMBL" id="U60553">
    <property type="protein sequence ID" value="AAB03611.1"/>
    <property type="molecule type" value="mRNA"/>
</dbReference>
<dbReference type="EMBL" id="AL713761">
    <property type="protein sequence ID" value="CAD28531.1"/>
    <property type="molecule type" value="mRNA"/>
</dbReference>
<dbReference type="EMBL" id="AK290482">
    <property type="protein sequence ID" value="BAF83171.1"/>
    <property type="molecule type" value="mRNA"/>
</dbReference>
<dbReference type="EMBL" id="BX538086">
    <property type="protein sequence ID" value="CAD98009.1"/>
    <property type="molecule type" value="mRNA"/>
</dbReference>
<dbReference type="EMBL" id="AY851164">
    <property type="protein sequence ID" value="AAW29943.1"/>
    <property type="molecule type" value="Genomic_DNA"/>
</dbReference>
<dbReference type="EMBL" id="AC009084">
    <property type="status" value="NOT_ANNOTATED_CDS"/>
    <property type="molecule type" value="Genomic_DNA"/>
</dbReference>
<dbReference type="EMBL" id="CH471092">
    <property type="protein sequence ID" value="EAW83058.1"/>
    <property type="molecule type" value="Genomic_DNA"/>
</dbReference>
<dbReference type="EMBL" id="CH471092">
    <property type="protein sequence ID" value="EAW83059.1"/>
    <property type="molecule type" value="Genomic_DNA"/>
</dbReference>
<dbReference type="EMBL" id="BC032095">
    <property type="protein sequence ID" value="AAH32095.1"/>
    <property type="molecule type" value="mRNA"/>
</dbReference>
<dbReference type="CCDS" id="CCDS10825.2">
    <molecule id="O00748-1"/>
</dbReference>
<dbReference type="CCDS" id="CCDS45507.2">
    <molecule id="O00748-2"/>
</dbReference>
<dbReference type="PIR" id="JC5408">
    <property type="entry name" value="JC5408"/>
</dbReference>
<dbReference type="RefSeq" id="NP_001352334.1">
    <molecule id="O00748-1"/>
    <property type="nucleotide sequence ID" value="NM_001365405.1"/>
</dbReference>
<dbReference type="RefSeq" id="NP_003860.2">
    <molecule id="O00748-1"/>
    <property type="nucleotide sequence ID" value="NM_003869.5"/>
</dbReference>
<dbReference type="RefSeq" id="NP_932327.2">
    <molecule id="O00748-2"/>
    <property type="nucleotide sequence ID" value="NM_198061.3"/>
</dbReference>
<dbReference type="SMR" id="O00748"/>
<dbReference type="BioGRID" id="114351">
    <property type="interactions" value="40"/>
</dbReference>
<dbReference type="FunCoup" id="O00748">
    <property type="interactions" value="523"/>
</dbReference>
<dbReference type="IntAct" id="O00748">
    <property type="interactions" value="27"/>
</dbReference>
<dbReference type="STRING" id="9606.ENSP00000499140"/>
<dbReference type="BindingDB" id="O00748"/>
<dbReference type="ChEMBL" id="CHEMBL3180"/>
<dbReference type="DrugBank" id="DB06695">
    <property type="generic name" value="Dabigatran etexilate"/>
</dbReference>
<dbReference type="DrugBank" id="DB16650">
    <property type="generic name" value="Deucravacitinib"/>
</dbReference>
<dbReference type="DrugBank" id="DB14845">
    <property type="generic name" value="Filgotinib"/>
</dbReference>
<dbReference type="DrugBank" id="DB00762">
    <property type="generic name" value="Irinotecan"/>
</dbReference>
<dbReference type="DrugBank" id="DB06209">
    <property type="generic name" value="Prasugrel"/>
</dbReference>
<dbReference type="DrugBank" id="DB00641">
    <property type="generic name" value="Simvastatin"/>
</dbReference>
<dbReference type="DrugBank" id="DB12095">
    <property type="generic name" value="Telotristat ethyl"/>
</dbReference>
<dbReference type="DrugBank" id="DB16349">
    <property type="generic name" value="Vicagrel"/>
</dbReference>
<dbReference type="DrugCentral" id="O00748"/>
<dbReference type="GuidetoPHARMACOLOGY" id="3298"/>
<dbReference type="SwissLipids" id="SLP:000001424"/>
<dbReference type="ESTHER" id="human-CES2">
    <property type="family name" value="Carb_B_Chordata"/>
</dbReference>
<dbReference type="MEROPS" id="S09.984"/>
<dbReference type="GlyCosmos" id="O00748">
    <property type="glycosylation" value="2 sites, No reported glycans"/>
</dbReference>
<dbReference type="GlyGen" id="O00748">
    <property type="glycosylation" value="2 sites"/>
</dbReference>
<dbReference type="iPTMnet" id="O00748"/>
<dbReference type="PhosphoSitePlus" id="O00748"/>
<dbReference type="BioMuta" id="CES2"/>
<dbReference type="jPOST" id="O00748"/>
<dbReference type="MassIVE" id="O00748"/>
<dbReference type="PaxDb" id="9606-ENSP00000317842"/>
<dbReference type="PeptideAtlas" id="O00748"/>
<dbReference type="PRIDE" id="O00748"/>
<dbReference type="ProteomicsDB" id="48014">
    <molecule id="O00748-1"/>
</dbReference>
<dbReference type="ProteomicsDB" id="48015">
    <molecule id="O00748-2"/>
</dbReference>
<dbReference type="Antibodypedia" id="15599">
    <property type="antibodies" value="363 antibodies from 34 providers"/>
</dbReference>
<dbReference type="DNASU" id="8824"/>
<dbReference type="Ensembl" id="ENST00000317091.10">
    <molecule id="O00748-1"/>
    <property type="protein sequence ID" value="ENSP00000317842.5"/>
    <property type="gene ID" value="ENSG00000172831.14"/>
</dbReference>
<dbReference type="Ensembl" id="ENST00000417689.6">
    <molecule id="O00748-2"/>
    <property type="protein sequence ID" value="ENSP00000394452.2"/>
    <property type="gene ID" value="ENSG00000172831.14"/>
</dbReference>
<dbReference type="GeneID" id="8824"/>
<dbReference type="KEGG" id="hsa:8824"/>
<dbReference type="MANE-Select" id="ENST00000317091.10">
    <property type="protein sequence ID" value="ENSP00000317842.5"/>
    <property type="RefSeq nucleotide sequence ID" value="NM_001365405.1"/>
    <property type="RefSeq protein sequence ID" value="NP_001352334.1"/>
</dbReference>
<dbReference type="UCSC" id="uc002eqq.4">
    <molecule id="O00748-1"/>
    <property type="organism name" value="human"/>
</dbReference>
<dbReference type="UCSC" id="uc002eqr.4">
    <property type="organism name" value="human"/>
</dbReference>
<dbReference type="AGR" id="HGNC:1864"/>
<dbReference type="CTD" id="8824"/>
<dbReference type="DisGeNET" id="8824"/>
<dbReference type="GeneCards" id="CES2"/>
<dbReference type="HGNC" id="HGNC:1864">
    <property type="gene designation" value="CES2"/>
</dbReference>
<dbReference type="HPA" id="ENSG00000172831">
    <property type="expression patterns" value="Tissue enhanced (intestine, liver)"/>
</dbReference>
<dbReference type="MIM" id="605278">
    <property type="type" value="gene"/>
</dbReference>
<dbReference type="neXtProt" id="NX_O00748"/>
<dbReference type="OpenTargets" id="ENSG00000172831"/>
<dbReference type="PharmGKB" id="PA377"/>
<dbReference type="VEuPathDB" id="HostDB:ENSG00000172831"/>
<dbReference type="eggNOG" id="KOG1516">
    <property type="taxonomic scope" value="Eukaryota"/>
</dbReference>
<dbReference type="GeneTree" id="ENSGT00940000153793"/>
<dbReference type="HOGENOM" id="CLU_006586_13_2_1"/>
<dbReference type="InParanoid" id="O00748"/>
<dbReference type="OMA" id="SIAHHIM"/>
<dbReference type="OrthoDB" id="3200163at2759"/>
<dbReference type="PAN-GO" id="O00748">
    <property type="GO annotations" value="2 GO annotations based on evolutionary models"/>
</dbReference>
<dbReference type="PhylomeDB" id="O00748"/>
<dbReference type="TreeFam" id="TF315470"/>
<dbReference type="BRENDA" id="3.1.1.1">
    <property type="organism ID" value="2681"/>
</dbReference>
<dbReference type="BRENDA" id="3.1.1.84">
    <property type="organism ID" value="2681"/>
</dbReference>
<dbReference type="PathwayCommons" id="O00748"/>
<dbReference type="Reactome" id="R-HSA-211945">
    <property type="pathway name" value="Phase I - Functionalization of compounds"/>
</dbReference>
<dbReference type="Reactome" id="R-HSA-9749641">
    <property type="pathway name" value="Aspirin ADME"/>
</dbReference>
<dbReference type="SABIO-RK" id="O00748"/>
<dbReference type="SignaLink" id="O00748"/>
<dbReference type="BioGRID-ORCS" id="8824">
    <property type="hits" value="14 hits in 1159 CRISPR screens"/>
</dbReference>
<dbReference type="ChiTaRS" id="CES2">
    <property type="organism name" value="human"/>
</dbReference>
<dbReference type="GeneWiki" id="Carboxylesterase_2"/>
<dbReference type="GenomeRNAi" id="8824"/>
<dbReference type="Pharos" id="O00748">
    <property type="development level" value="Tchem"/>
</dbReference>
<dbReference type="PRO" id="PR:O00748"/>
<dbReference type="Proteomes" id="UP000005640">
    <property type="component" value="Chromosome 16"/>
</dbReference>
<dbReference type="RNAct" id="O00748">
    <property type="molecule type" value="protein"/>
</dbReference>
<dbReference type="Bgee" id="ENSG00000172831">
    <property type="expression patterns" value="Expressed in jejunal mucosa and 205 other cell types or tissues"/>
</dbReference>
<dbReference type="ExpressionAtlas" id="O00748">
    <property type="expression patterns" value="baseline and differential"/>
</dbReference>
<dbReference type="GO" id="GO:0005783">
    <property type="term" value="C:endoplasmic reticulum"/>
    <property type="evidence" value="ECO:0000304"/>
    <property type="project" value="ProtInc"/>
</dbReference>
<dbReference type="GO" id="GO:0005788">
    <property type="term" value="C:endoplasmic reticulum lumen"/>
    <property type="evidence" value="ECO:0000304"/>
    <property type="project" value="Reactome"/>
</dbReference>
<dbReference type="GO" id="GO:0043231">
    <property type="term" value="C:intracellular membrane-bounded organelle"/>
    <property type="evidence" value="ECO:0000318"/>
    <property type="project" value="GO_Central"/>
</dbReference>
<dbReference type="GO" id="GO:0106435">
    <property type="term" value="F:carboxylesterase activity"/>
    <property type="evidence" value="ECO:0000314"/>
    <property type="project" value="BHF-UCL"/>
</dbReference>
<dbReference type="GO" id="GO:0052689">
    <property type="term" value="F:carboxylic ester hydrolase activity"/>
    <property type="evidence" value="ECO:0000318"/>
    <property type="project" value="GO_Central"/>
</dbReference>
<dbReference type="GO" id="GO:0047374">
    <property type="term" value="F:methylumbelliferyl-acetate deacetylase activity"/>
    <property type="evidence" value="ECO:0007669"/>
    <property type="project" value="UniProtKB-EC"/>
</dbReference>
<dbReference type="GO" id="GO:0009056">
    <property type="term" value="P:catabolic process"/>
    <property type="evidence" value="ECO:0000304"/>
    <property type="project" value="ProtInc"/>
</dbReference>
<dbReference type="GO" id="GO:0006693">
    <property type="term" value="P:prostaglandin metabolic process"/>
    <property type="evidence" value="ECO:0000314"/>
    <property type="project" value="BHF-UCL"/>
</dbReference>
<dbReference type="GO" id="GO:0006805">
    <property type="term" value="P:xenobiotic metabolic process"/>
    <property type="evidence" value="ECO:0000304"/>
    <property type="project" value="Reactome"/>
</dbReference>
<dbReference type="CDD" id="cd00312">
    <property type="entry name" value="Esterase_lipase"/>
    <property type="match status" value="1"/>
</dbReference>
<dbReference type="FunFam" id="3.40.50.1820:FF:000011">
    <property type="entry name" value="Carboxylic ester hydrolase"/>
    <property type="match status" value="1"/>
</dbReference>
<dbReference type="Gene3D" id="3.40.50.1820">
    <property type="entry name" value="alpha/beta hydrolase"/>
    <property type="match status" value="1"/>
</dbReference>
<dbReference type="InterPro" id="IPR029058">
    <property type="entry name" value="AB_hydrolase_fold"/>
</dbReference>
<dbReference type="InterPro" id="IPR002018">
    <property type="entry name" value="CarbesteraseB"/>
</dbReference>
<dbReference type="InterPro" id="IPR019826">
    <property type="entry name" value="Carboxylesterase_B_AS"/>
</dbReference>
<dbReference type="InterPro" id="IPR019819">
    <property type="entry name" value="Carboxylesterase_B_CS"/>
</dbReference>
<dbReference type="InterPro" id="IPR050309">
    <property type="entry name" value="Type-B_Carboxylest/Lipase"/>
</dbReference>
<dbReference type="PANTHER" id="PTHR11559">
    <property type="entry name" value="CARBOXYLESTERASE"/>
    <property type="match status" value="1"/>
</dbReference>
<dbReference type="Pfam" id="PF00135">
    <property type="entry name" value="COesterase"/>
    <property type="match status" value="1"/>
</dbReference>
<dbReference type="SUPFAM" id="SSF53474">
    <property type="entry name" value="alpha/beta-Hydrolases"/>
    <property type="match status" value="1"/>
</dbReference>
<dbReference type="PROSITE" id="PS00122">
    <property type="entry name" value="CARBOXYLESTERASE_B_1"/>
    <property type="match status" value="1"/>
</dbReference>
<dbReference type="PROSITE" id="PS00941">
    <property type="entry name" value="CARBOXYLESTERASE_B_2"/>
    <property type="match status" value="1"/>
</dbReference>
<accession>O00748</accession>
<accession>A0A024R6X1</accession>
<accession>A8K367</accession>
<accession>Q16859</accession>
<accession>Q5MAB8</accession>
<accession>Q7Z366</accession>
<accession>Q8IUP4</accession>
<accession>Q8TCP8</accession>
<reference key="1">
    <citation type="journal article" date="1997" name="Biochem. Biophys. Res. Commun.">
        <title>Molecular cloning and characterization of a novel putative carboxylesterase, present in human intestine and liver.</title>
        <authorList>
            <person name="Schwer H."/>
            <person name="Langmann T."/>
            <person name="Daig R."/>
            <person name="Becker A."/>
            <person name="Aslanidis C."/>
            <person name="Schmitz G."/>
        </authorList>
    </citation>
    <scope>NUCLEOTIDE SEQUENCE [MRNA] (ISOFORM 1)</scope>
    <scope>TISSUE SPECIFICITY</scope>
    <source>
        <tissue>Small intestine</tissue>
    </source>
</reference>
<reference key="2">
    <citation type="journal article" date="1997" name="J. Biol. Chem.">
        <title>Purification and cloning of a broad substrate specificity human liver carboxylesterase that catalyzes the hydrolysis of cocaine and heroin.</title>
        <authorList>
            <person name="Pindel E.V."/>
            <person name="Kedishvili N.Y."/>
            <person name="Abraham T.L."/>
            <person name="Brzezinski M.R."/>
            <person name="Zhang J."/>
            <person name="Dean R.A."/>
            <person name="Bosron W.F."/>
        </authorList>
    </citation>
    <scope>NUCLEOTIDE SEQUENCE [MRNA] (ISOFORM 1)</scope>
    <scope>PROTEIN SEQUENCE OF 27-34; 57-70; 227-235; 300-305; 346-351; 447-454; 458-466; 535-540 AND 546-551</scope>
    <scope>FUNCTION</scope>
    <scope>CATALYTIC ACTIVITY</scope>
    <scope>SUBUNIT</scope>
    <scope>GLYCOSYLATION</scope>
    <scope>BIOPHYSICOCHEMICAL PROPERTIES</scope>
    <source>
        <tissue>Liver</tissue>
    </source>
</reference>
<reference key="3">
    <citation type="submission" date="1997-11" db="EMBL/GenBank/DDBJ databases">
        <title>Molecular cloning and expression of a human liver cDNA encoding a novel carboxylesterase.</title>
        <authorList>
            <person name="Sone T."/>
            <person name="Ishida Y."/>
            <person name="Takabatake E."/>
            <person name="Wang C."/>
            <person name="Pohl L."/>
            <person name="Isobe M."/>
        </authorList>
    </citation>
    <scope>NUCLEOTIDE SEQUENCE [MRNA] (ISOFORM 1)</scope>
    <source>
        <tissue>Liver</tissue>
    </source>
</reference>
<reference key="4">
    <citation type="journal article" date="2004" name="Nat. Genet.">
        <title>Complete sequencing and characterization of 21,243 full-length human cDNAs.</title>
        <authorList>
            <person name="Ota T."/>
            <person name="Suzuki Y."/>
            <person name="Nishikawa T."/>
            <person name="Otsuki T."/>
            <person name="Sugiyama T."/>
            <person name="Irie R."/>
            <person name="Wakamatsu A."/>
            <person name="Hayashi K."/>
            <person name="Sato H."/>
            <person name="Nagai K."/>
            <person name="Kimura K."/>
            <person name="Makita H."/>
            <person name="Sekine M."/>
            <person name="Obayashi M."/>
            <person name="Nishi T."/>
            <person name="Shibahara T."/>
            <person name="Tanaka T."/>
            <person name="Ishii S."/>
            <person name="Yamamoto J."/>
            <person name="Saito K."/>
            <person name="Kawai Y."/>
            <person name="Isono Y."/>
            <person name="Nakamura Y."/>
            <person name="Nagahari K."/>
            <person name="Murakami K."/>
            <person name="Yasuda T."/>
            <person name="Iwayanagi T."/>
            <person name="Wagatsuma M."/>
            <person name="Shiratori A."/>
            <person name="Sudo H."/>
            <person name="Hosoiri T."/>
            <person name="Kaku Y."/>
            <person name="Kodaira H."/>
            <person name="Kondo H."/>
            <person name="Sugawara M."/>
            <person name="Takahashi M."/>
            <person name="Kanda K."/>
            <person name="Yokoi T."/>
            <person name="Furuya T."/>
            <person name="Kikkawa E."/>
            <person name="Omura Y."/>
            <person name="Abe K."/>
            <person name="Kamihara K."/>
            <person name="Katsuta N."/>
            <person name="Sato K."/>
            <person name="Tanikawa M."/>
            <person name="Yamazaki M."/>
            <person name="Ninomiya K."/>
            <person name="Ishibashi T."/>
            <person name="Yamashita H."/>
            <person name="Murakawa K."/>
            <person name="Fujimori K."/>
            <person name="Tanai H."/>
            <person name="Kimata M."/>
            <person name="Watanabe M."/>
            <person name="Hiraoka S."/>
            <person name="Chiba Y."/>
            <person name="Ishida S."/>
            <person name="Ono Y."/>
            <person name="Takiguchi S."/>
            <person name="Watanabe S."/>
            <person name="Yosida M."/>
            <person name="Hotuta T."/>
            <person name="Kusano J."/>
            <person name="Kanehori K."/>
            <person name="Takahashi-Fujii A."/>
            <person name="Hara H."/>
            <person name="Tanase T.-O."/>
            <person name="Nomura Y."/>
            <person name="Togiya S."/>
            <person name="Komai F."/>
            <person name="Hara R."/>
            <person name="Takeuchi K."/>
            <person name="Arita M."/>
            <person name="Imose N."/>
            <person name="Musashino K."/>
            <person name="Yuuki H."/>
            <person name="Oshima A."/>
            <person name="Sasaki N."/>
            <person name="Aotsuka S."/>
            <person name="Yoshikawa Y."/>
            <person name="Matsunawa H."/>
            <person name="Ichihara T."/>
            <person name="Shiohata N."/>
            <person name="Sano S."/>
            <person name="Moriya S."/>
            <person name="Momiyama H."/>
            <person name="Satoh N."/>
            <person name="Takami S."/>
            <person name="Terashima Y."/>
            <person name="Suzuki O."/>
            <person name="Nakagawa S."/>
            <person name="Senoh A."/>
            <person name="Mizoguchi H."/>
            <person name="Goto Y."/>
            <person name="Shimizu F."/>
            <person name="Wakebe H."/>
            <person name="Hishigaki H."/>
            <person name="Watanabe T."/>
            <person name="Sugiyama A."/>
            <person name="Takemoto M."/>
            <person name="Kawakami B."/>
            <person name="Yamazaki M."/>
            <person name="Watanabe K."/>
            <person name="Kumagai A."/>
            <person name="Itakura S."/>
            <person name="Fukuzumi Y."/>
            <person name="Fujimori Y."/>
            <person name="Komiyama M."/>
            <person name="Tashiro H."/>
            <person name="Tanigami A."/>
            <person name="Fujiwara T."/>
            <person name="Ono T."/>
            <person name="Yamada K."/>
            <person name="Fujii Y."/>
            <person name="Ozaki K."/>
            <person name="Hirao M."/>
            <person name="Ohmori Y."/>
            <person name="Kawabata A."/>
            <person name="Hikiji T."/>
            <person name="Kobatake N."/>
            <person name="Inagaki H."/>
            <person name="Ikema Y."/>
            <person name="Okamoto S."/>
            <person name="Okitani R."/>
            <person name="Kawakami T."/>
            <person name="Noguchi S."/>
            <person name="Itoh T."/>
            <person name="Shigeta K."/>
            <person name="Senba T."/>
            <person name="Matsumura K."/>
            <person name="Nakajima Y."/>
            <person name="Mizuno T."/>
            <person name="Morinaga M."/>
            <person name="Sasaki M."/>
            <person name="Togashi T."/>
            <person name="Oyama M."/>
            <person name="Hata H."/>
            <person name="Watanabe M."/>
            <person name="Komatsu T."/>
            <person name="Mizushima-Sugano J."/>
            <person name="Satoh T."/>
            <person name="Shirai Y."/>
            <person name="Takahashi Y."/>
            <person name="Nakagawa K."/>
            <person name="Okumura K."/>
            <person name="Nagase T."/>
            <person name="Nomura N."/>
            <person name="Kikuchi H."/>
            <person name="Masuho Y."/>
            <person name="Yamashita R."/>
            <person name="Nakai K."/>
            <person name="Yada T."/>
            <person name="Nakamura Y."/>
            <person name="Ohara O."/>
            <person name="Isogai T."/>
            <person name="Sugano S."/>
        </authorList>
    </citation>
    <scope>NUCLEOTIDE SEQUENCE [LARGE SCALE MRNA] (ISOFORM 1)</scope>
    <source>
        <tissue>Brain</tissue>
    </source>
</reference>
<reference key="5">
    <citation type="journal article" date="2007" name="BMC Genomics">
        <title>The full-ORF clone resource of the German cDNA consortium.</title>
        <authorList>
            <person name="Bechtel S."/>
            <person name="Rosenfelder H."/>
            <person name="Duda A."/>
            <person name="Schmidt C.P."/>
            <person name="Ernst U."/>
            <person name="Wellenreuther R."/>
            <person name="Mehrle A."/>
            <person name="Schuster C."/>
            <person name="Bahr A."/>
            <person name="Bloecker H."/>
            <person name="Heubner D."/>
            <person name="Hoerlein A."/>
            <person name="Michel G."/>
            <person name="Wedler H."/>
            <person name="Koehrer K."/>
            <person name="Ottenwaelder B."/>
            <person name="Poustka A."/>
            <person name="Wiemann S."/>
            <person name="Schupp I."/>
        </authorList>
    </citation>
    <scope>NUCLEOTIDE SEQUENCE [LARGE SCALE MRNA] (ISOFORM 2)</scope>
    <source>
        <tissue>Endometrial adenocarcinoma</tissue>
        <tissue>Testis</tissue>
    </source>
</reference>
<reference key="6">
    <citation type="submission" date="2004-12" db="EMBL/GenBank/DDBJ databases">
        <authorList>
            <consortium name="NIEHS SNPs program"/>
        </authorList>
    </citation>
    <scope>NUCLEOTIDE SEQUENCE [GENOMIC DNA]</scope>
</reference>
<reference key="7">
    <citation type="journal article" date="2004" name="Nature">
        <title>The sequence and analysis of duplication-rich human chromosome 16.</title>
        <authorList>
            <person name="Martin J."/>
            <person name="Han C."/>
            <person name="Gordon L.A."/>
            <person name="Terry A."/>
            <person name="Prabhakar S."/>
            <person name="She X."/>
            <person name="Xie G."/>
            <person name="Hellsten U."/>
            <person name="Chan Y.M."/>
            <person name="Altherr M."/>
            <person name="Couronne O."/>
            <person name="Aerts A."/>
            <person name="Bajorek E."/>
            <person name="Black S."/>
            <person name="Blumer H."/>
            <person name="Branscomb E."/>
            <person name="Brown N.C."/>
            <person name="Bruno W.J."/>
            <person name="Buckingham J.M."/>
            <person name="Callen D.F."/>
            <person name="Campbell C.S."/>
            <person name="Campbell M.L."/>
            <person name="Campbell E.W."/>
            <person name="Caoile C."/>
            <person name="Challacombe J.F."/>
            <person name="Chasteen L.A."/>
            <person name="Chertkov O."/>
            <person name="Chi H.C."/>
            <person name="Christensen M."/>
            <person name="Clark L.M."/>
            <person name="Cohn J.D."/>
            <person name="Denys M."/>
            <person name="Detter J.C."/>
            <person name="Dickson M."/>
            <person name="Dimitrijevic-Bussod M."/>
            <person name="Escobar J."/>
            <person name="Fawcett J.J."/>
            <person name="Flowers D."/>
            <person name="Fotopulos D."/>
            <person name="Glavina T."/>
            <person name="Gomez M."/>
            <person name="Gonzales E."/>
            <person name="Goodstein D."/>
            <person name="Goodwin L.A."/>
            <person name="Grady D.L."/>
            <person name="Grigoriev I."/>
            <person name="Groza M."/>
            <person name="Hammon N."/>
            <person name="Hawkins T."/>
            <person name="Haydu L."/>
            <person name="Hildebrand C.E."/>
            <person name="Huang W."/>
            <person name="Israni S."/>
            <person name="Jett J."/>
            <person name="Jewett P.B."/>
            <person name="Kadner K."/>
            <person name="Kimball H."/>
            <person name="Kobayashi A."/>
            <person name="Krawczyk M.-C."/>
            <person name="Leyba T."/>
            <person name="Longmire J.L."/>
            <person name="Lopez F."/>
            <person name="Lou Y."/>
            <person name="Lowry S."/>
            <person name="Ludeman T."/>
            <person name="Manohar C.F."/>
            <person name="Mark G.A."/>
            <person name="McMurray K.L."/>
            <person name="Meincke L.J."/>
            <person name="Morgan J."/>
            <person name="Moyzis R.K."/>
            <person name="Mundt M.O."/>
            <person name="Munk A.C."/>
            <person name="Nandkeshwar R.D."/>
            <person name="Pitluck S."/>
            <person name="Pollard M."/>
            <person name="Predki P."/>
            <person name="Parson-Quintana B."/>
            <person name="Ramirez L."/>
            <person name="Rash S."/>
            <person name="Retterer J."/>
            <person name="Ricke D.O."/>
            <person name="Robinson D.L."/>
            <person name="Rodriguez A."/>
            <person name="Salamov A."/>
            <person name="Saunders E.H."/>
            <person name="Scott D."/>
            <person name="Shough T."/>
            <person name="Stallings R.L."/>
            <person name="Stalvey M."/>
            <person name="Sutherland R.D."/>
            <person name="Tapia R."/>
            <person name="Tesmer J.G."/>
            <person name="Thayer N."/>
            <person name="Thompson L.S."/>
            <person name="Tice H."/>
            <person name="Torney D.C."/>
            <person name="Tran-Gyamfi M."/>
            <person name="Tsai M."/>
            <person name="Ulanovsky L.E."/>
            <person name="Ustaszewska A."/>
            <person name="Vo N."/>
            <person name="White P.S."/>
            <person name="Williams A.L."/>
            <person name="Wills P.L."/>
            <person name="Wu J.-R."/>
            <person name="Wu K."/>
            <person name="Yang J."/>
            <person name="DeJong P."/>
            <person name="Bruce D."/>
            <person name="Doggett N.A."/>
            <person name="Deaven L."/>
            <person name="Schmutz J."/>
            <person name="Grimwood J."/>
            <person name="Richardson P."/>
            <person name="Rokhsar D.S."/>
            <person name="Eichler E.E."/>
            <person name="Gilna P."/>
            <person name="Lucas S.M."/>
            <person name="Myers R.M."/>
            <person name="Rubin E.M."/>
            <person name="Pennacchio L.A."/>
        </authorList>
    </citation>
    <scope>NUCLEOTIDE SEQUENCE [LARGE SCALE GENOMIC DNA]</scope>
</reference>
<reference key="8">
    <citation type="submission" date="2005-07" db="EMBL/GenBank/DDBJ databases">
        <authorList>
            <person name="Mural R.J."/>
            <person name="Istrail S."/>
            <person name="Sutton G.G."/>
            <person name="Florea L."/>
            <person name="Halpern A.L."/>
            <person name="Mobarry C.M."/>
            <person name="Lippert R."/>
            <person name="Walenz B."/>
            <person name="Shatkay H."/>
            <person name="Dew I."/>
            <person name="Miller J.R."/>
            <person name="Flanigan M.J."/>
            <person name="Edwards N.J."/>
            <person name="Bolanos R."/>
            <person name="Fasulo D."/>
            <person name="Halldorsson B.V."/>
            <person name="Hannenhalli S."/>
            <person name="Turner R."/>
            <person name="Yooseph S."/>
            <person name="Lu F."/>
            <person name="Nusskern D.R."/>
            <person name="Shue B.C."/>
            <person name="Zheng X.H."/>
            <person name="Zhong F."/>
            <person name="Delcher A.L."/>
            <person name="Huson D.H."/>
            <person name="Kravitz S.A."/>
            <person name="Mouchard L."/>
            <person name="Reinert K."/>
            <person name="Remington K.A."/>
            <person name="Clark A.G."/>
            <person name="Waterman M.S."/>
            <person name="Eichler E.E."/>
            <person name="Adams M.D."/>
            <person name="Hunkapiller M.W."/>
            <person name="Myers E.W."/>
            <person name="Venter J.C."/>
        </authorList>
    </citation>
    <scope>NUCLEOTIDE SEQUENCE [LARGE SCALE GENOMIC DNA]</scope>
</reference>
<reference key="9">
    <citation type="journal article" date="2004" name="Genome Res.">
        <title>The status, quality, and expansion of the NIH full-length cDNA project: the Mammalian Gene Collection (MGC).</title>
        <authorList>
            <consortium name="The MGC Project Team"/>
        </authorList>
    </citation>
    <scope>NUCLEOTIDE SEQUENCE [LARGE SCALE MRNA] (ISOFORM 1)</scope>
    <source>
        <tissue>Skin</tissue>
    </source>
</reference>
<reference key="10">
    <citation type="journal article" date="2009" name="J. Proteome Res.">
        <title>Glycoproteomics analysis of human liver tissue by combination of multiple enzyme digestion and hydrazide chemistry.</title>
        <authorList>
            <person name="Chen R."/>
            <person name="Jiang X."/>
            <person name="Sun D."/>
            <person name="Han G."/>
            <person name="Wang F."/>
            <person name="Ye M."/>
            <person name="Wang L."/>
            <person name="Zou H."/>
        </authorList>
    </citation>
    <scope>GLYCOSYLATION [LARGE SCALE ANALYSIS] AT ASN-111</scope>
    <source>
        <tissue>Liver</tissue>
    </source>
</reference>
<reference key="11">
    <citation type="journal article" date="2010" name="Chem. Res. Toxicol.">
        <title>Inactivation of lipid glyceryl ester metabolism in human THP1 monocytes/macrophages by activated organophosphorus insecticides: role of carboxylesterases 1 and 2.</title>
        <authorList>
            <person name="Xie S."/>
            <person name="Borazjani A."/>
            <person name="Hatfield M.J."/>
            <person name="Edwards C.C."/>
            <person name="Potter P.M."/>
            <person name="Ross M.K."/>
        </authorList>
    </citation>
    <scope>CATALYTIC ACTIVITY</scope>
    <scope>BIOPHYSICOCHEMICAL PROPERTIES</scope>
    <scope>FUNCTION</scope>
    <source>
        <tissue>Macrophage</tissue>
    </source>
</reference>
<reference key="12">
    <citation type="journal article" date="2013" name="Appl. Microbiol. Biotechnol.">
        <title>Carboxylesterase 2 production and characterization in human cells: new insights into enzyme oligomerization and activity.</title>
        <authorList>
            <person name="Lamego J."/>
            <person name="Cunha B."/>
            <person name="Peixoto C."/>
            <person name="Sousa M.F."/>
            <person name="Alves P.M."/>
            <person name="Simplicio A.L."/>
            <person name="Coroadinha A.S."/>
        </authorList>
    </citation>
    <scope>SUBCELLULAR LOCATION</scope>
</reference>
<reference key="13">
    <citation type="journal article" date="2018" name="Protein Cell">
        <title>Carboxylesterases in lipid metabolism: from mouse to human.</title>
        <authorList>
            <person name="Lian J."/>
            <person name="Nelson R."/>
            <person name="Lehner R."/>
        </authorList>
    </citation>
    <scope>REVIEW</scope>
    <scope>ALTERNATIVE INITIATION (ISOFORMS 3 AND 4)</scope>
</reference>
<reference key="14">
    <citation type="journal article" date="2011" name="BMC Syst. Biol.">
        <title>Initial characterization of the human central proteome.</title>
        <authorList>
            <person name="Burkard T.R."/>
            <person name="Planyavsky M."/>
            <person name="Kaupe I."/>
            <person name="Breitwieser F.P."/>
            <person name="Buerckstuemmer T."/>
            <person name="Bennett K.L."/>
            <person name="Superti-Furga G."/>
            <person name="Colinge J."/>
        </authorList>
    </citation>
    <scope>IDENTIFICATION BY MASS SPECTROMETRY [LARGE SCALE ANALYSIS]</scope>
</reference>
<reference key="15">
    <citation type="journal article" date="2014" name="J. Proteomics">
        <title>An enzyme assisted RP-RPLC approach for in-depth analysis of human liver phosphoproteome.</title>
        <authorList>
            <person name="Bian Y."/>
            <person name="Song C."/>
            <person name="Cheng K."/>
            <person name="Dong M."/>
            <person name="Wang F."/>
            <person name="Huang J."/>
            <person name="Sun D."/>
            <person name="Wang L."/>
            <person name="Ye M."/>
            <person name="Zou H."/>
        </authorList>
    </citation>
    <scope>IDENTIFICATION BY MASS SPECTROMETRY [LARGE SCALE ANALYSIS]</scope>
    <source>
        <tissue>Liver</tissue>
    </source>
</reference>
<reference key="16">
    <citation type="journal article" date="2003" name="J. Hum. Genet.">
        <title>Catalog of 680 variations among eight cytochrome p450 (CYP) genes, nine esterase genes, and two other genes in the Japanese population.</title>
        <authorList>
            <person name="Saito S."/>
            <person name="Iida A."/>
            <person name="Sekine A."/>
            <person name="Kawauchi S."/>
            <person name="Higuchi S."/>
            <person name="Ogawa C."/>
            <person name="Nakamura Y."/>
        </authorList>
    </citation>
    <scope>VARIANT HIS-206</scope>
</reference>
<reference key="17">
    <citation type="journal article" date="2003" name="Drug Metab. Pharmacokinet.">
        <title>Twelve novel single nucleotide polymorphisms in the CES2 gene encoding human carboxylesterase 2 (hCE-2).</title>
        <authorList>
            <person name="Kim S.-R."/>
            <person name="Nakamura T."/>
            <person name="Saito Y."/>
            <person name="Sai K."/>
            <person name="Nakajima T."/>
            <person name="Saito H."/>
            <person name="Shirao K."/>
            <person name="Minami H."/>
            <person name="Ohtsu A."/>
            <person name="Yoshida T."/>
            <person name="Saijo N."/>
            <person name="Ozawa S."/>
            <person name="Sawada J."/>
        </authorList>
    </citation>
    <scope>VARIANT TRP-34</scope>
</reference>
<evidence type="ECO:0000250" key="1">
    <source>
        <dbReference type="UniProtKB" id="P14943"/>
    </source>
</evidence>
<evidence type="ECO:0000250" key="2">
    <source>
        <dbReference type="UniProtKB" id="P23141"/>
    </source>
</evidence>
<evidence type="ECO:0000255" key="3"/>
<evidence type="ECO:0000255" key="4">
    <source>
        <dbReference type="PROSITE-ProRule" id="PRU10039"/>
    </source>
</evidence>
<evidence type="ECO:0000269" key="5">
    <source>
    </source>
</evidence>
<evidence type="ECO:0000269" key="6">
    <source>
    </source>
</evidence>
<evidence type="ECO:0000269" key="7">
    <source>
    </source>
</evidence>
<evidence type="ECO:0000269" key="8">
    <source>
    </source>
</evidence>
<evidence type="ECO:0000269" key="9">
    <source>
    </source>
</evidence>
<evidence type="ECO:0000269" key="10">
    <source>
    </source>
</evidence>
<evidence type="ECO:0000269" key="11">
    <source>
    </source>
</evidence>
<evidence type="ECO:0000303" key="12">
    <source>
    </source>
</evidence>
<evidence type="ECO:0000303" key="13">
    <source>
    </source>
</evidence>
<evidence type="ECO:0000305" key="14"/>
<evidence type="ECO:0000305" key="15">
    <source>
    </source>
</evidence>
<evidence type="ECO:0000312" key="16">
    <source>
        <dbReference type="HGNC" id="HGNC:1864"/>
    </source>
</evidence>
<organism>
    <name type="scientific">Homo sapiens</name>
    <name type="common">Human</name>
    <dbReference type="NCBI Taxonomy" id="9606"/>
    <lineage>
        <taxon>Eukaryota</taxon>
        <taxon>Metazoa</taxon>
        <taxon>Chordata</taxon>
        <taxon>Craniata</taxon>
        <taxon>Vertebrata</taxon>
        <taxon>Euteleostomi</taxon>
        <taxon>Mammalia</taxon>
        <taxon>Eutheria</taxon>
        <taxon>Euarchontoglires</taxon>
        <taxon>Primates</taxon>
        <taxon>Haplorrhini</taxon>
        <taxon>Catarrhini</taxon>
        <taxon>Hominidae</taxon>
        <taxon>Homo</taxon>
    </lineage>
</organism>
<name>EST2_HUMAN</name>
<gene>
    <name evidence="16" type="primary">CES2</name>
    <name type="synonym">ICE</name>
</gene>
<sequence>MRLHRLRARLSAVACGLLLLLVRGQGQDSASPIRTTHTGQVLGSLVHVKGANAGVQTFLGIPFAKPPLGPLRFAPPEPPESWSGVRDGTTHPAMCLQDLTAVESEFLSQFNMTFPSDSMSEDCLYLSIYTPAHSHEGSNLPVMVWIHGGALVFGMASLYDGSMLAALENVVVVIIQYRLGVLGFFSTGDKHATGNWGYLDQVAALRWVQQNIAHFGGNPDRVTIFGESAGGTSVSSLVVSPISQGLFHGAIMESGVALLPGLIASSADVISTVVANLSACDQVDSEALVGCLRGKSKEEILAINKPFKMIPGVVDGVFLPRHPQELLASADFQPVPSIVGVNNNEFGWLIPKVMRIYDTQKEMDREASQAALQKMLTLLMLPPTFGDLLREEYIGDNGDPQTLQAQFQEMMADSMFVIPALQVAHFQCSRAPVYFYEFQHQPSWLKNIRPPHMKADHGDELPFVFRSFFGGNYIKFTEEEEQLSRKMMKYWANFARNGNPNGEGLPHWPLFDQEEQYLQLNLQPAVGRALKAHRLQFWKKALPQKIQELEEPEERHTEL</sequence>
<feature type="signal peptide" evidence="11">
    <location>
        <begin position="1"/>
        <end position="26"/>
    </location>
</feature>
<feature type="chain" id="PRO_0000008572" description="Cocaine esterase">
    <location>
        <begin position="27"/>
        <end position="559"/>
    </location>
</feature>
<feature type="short sequence motif" description="Prevents secretion from ER" evidence="3">
    <location>
        <begin position="556"/>
        <end position="559"/>
    </location>
</feature>
<feature type="active site" description="Acyl-ester intermediate" evidence="4">
    <location>
        <position position="228"/>
    </location>
</feature>
<feature type="active site" description="Charge relay system" evidence="2">
    <location>
        <position position="345"/>
    </location>
</feature>
<feature type="active site" description="Charge relay system" evidence="2">
    <location>
        <position position="457"/>
    </location>
</feature>
<feature type="modified residue" description="Pyrrolidone carboxylic acid" evidence="1">
    <location>
        <position position="27"/>
    </location>
</feature>
<feature type="glycosylation site" description="N-linked (GlcNAc...) asparagine" evidence="7">
    <location>
        <position position="111"/>
    </location>
</feature>
<feature type="glycosylation site" description="N-linked (GlcNAc...) asparagine" evidence="3">
    <location>
        <position position="276"/>
    </location>
</feature>
<feature type="disulfide bond" evidence="2">
    <location>
        <begin position="95"/>
        <end position="123"/>
    </location>
</feature>
<feature type="disulfide bond" evidence="2">
    <location>
        <begin position="280"/>
        <end position="291"/>
    </location>
</feature>
<feature type="splice variant" id="VSP_059804" description="In isoform 3 and isoform 4." evidence="13">
    <original>M</original>
    <variation>MTAQSRSPTTPTFPGPSQRTPLTPCPVQTPRLGKALIHCWTDPGQPLGEQQRVRRQRTETSEPTM</variation>
    <location>
        <position position="1"/>
    </location>
</feature>
<feature type="splice variant" id="VSP_010161" description="In isoform 2 and isoform 4." evidence="12">
    <original>GDELPFVFRSFFGGNYI</original>
    <variation>V</variation>
    <location>
        <begin position="458"/>
        <end position="474"/>
    </location>
</feature>
<feature type="sequence variant" id="VAR_018396" description="In dbSNP:rs72547531." evidence="6">
    <original>R</original>
    <variation>W</variation>
    <location>
        <position position="34"/>
    </location>
</feature>
<feature type="sequence variant" id="VAR_018397" description="In dbSNP:rs8192924." evidence="5">
    <original>R</original>
    <variation>H</variation>
    <location>
        <position position="206"/>
    </location>
</feature>
<feature type="sequence conflict" description="In Ref. 2; AA sequence." evidence="14" ref="2">
    <location>
        <begin position="2"/>
        <end position="10"/>
    </location>
</feature>
<feature type="sequence conflict" description="In Ref. 4; BAF83171." evidence="14" ref="4">
    <original>G</original>
    <variation>S</variation>
    <location>
        <position position="180"/>
    </location>
</feature>
<feature type="sequence conflict" description="In Ref. 4; BAF83171." evidence="14" ref="4">
    <original>V</original>
    <variation>M</variation>
    <location>
        <position position="239"/>
    </location>
</feature>
<feature type="sequence conflict" description="In Ref. 5; CAD98009." evidence="14" ref="5">
    <original>F</original>
    <variation>S</variation>
    <location>
        <position position="385"/>
    </location>
</feature>
<feature type="sequence conflict" description="In Ref. 5; CAD98009." evidence="14" ref="5">
    <original>Q</original>
    <variation>R</variation>
    <location>
        <position position="519"/>
    </location>
</feature>
<keyword id="KW-0024">Alternative initiation</keyword>
<keyword id="KW-0025">Alternative splicing</keyword>
<keyword id="KW-0903">Direct protein sequencing</keyword>
<keyword id="KW-1015">Disulfide bond</keyword>
<keyword id="KW-0256">Endoplasmic reticulum</keyword>
<keyword id="KW-0325">Glycoprotein</keyword>
<keyword id="KW-0378">Hydrolase</keyword>
<keyword id="KW-0443">Lipid metabolism</keyword>
<keyword id="KW-1267">Proteomics identification</keyword>
<keyword id="KW-0873">Pyrrolidone carboxylic acid</keyword>
<keyword id="KW-1185">Reference proteome</keyword>
<keyword id="KW-0719">Serine esterase</keyword>
<keyword id="KW-0732">Signal</keyword>
<proteinExistence type="evidence at protein level"/>
<comment type="function">
    <text evidence="8 11 13">Involved in the detoxification of xenobiotics and in the activation of ester and amide prodrugs (PubMed:9169443). Shows high catalytic efficiency for hydrolysis of cocaine, 4-methylumbelliferyl acetate, heroin and 6-monoacetylmorphine (PubMed:9169443). Hydrolyzes aspirin, substrates with large alcohol group and small acyl group and endogenous lipids such as triacylglycerol (PubMed:28677105). Converts monoacylglycerides to free fatty acids and glycerol. Hydrolyzes of 2-arachidonoylglycerol and prostaglandins (PubMed:21049984).</text>
</comment>
<comment type="catalytic activity">
    <reaction evidence="11">
        <text>cocaine + H2O = ecgonine methyl ester + benzoate + H(+)</text>
        <dbReference type="Rhea" id="RHEA:27506"/>
        <dbReference type="ChEBI" id="CHEBI:15377"/>
        <dbReference type="ChEBI" id="CHEBI:15378"/>
        <dbReference type="ChEBI" id="CHEBI:16150"/>
        <dbReference type="ChEBI" id="CHEBI:59908"/>
        <dbReference type="ChEBI" id="CHEBI:60056"/>
        <dbReference type="EC" id="3.1.1.84"/>
    </reaction>
</comment>
<comment type="catalytic activity">
    <reaction evidence="4 11">
        <text>a carboxylic ester + H2O = an alcohol + a carboxylate + H(+)</text>
        <dbReference type="Rhea" id="RHEA:21164"/>
        <dbReference type="ChEBI" id="CHEBI:15377"/>
        <dbReference type="ChEBI" id="CHEBI:15378"/>
        <dbReference type="ChEBI" id="CHEBI:29067"/>
        <dbReference type="ChEBI" id="CHEBI:30879"/>
        <dbReference type="ChEBI" id="CHEBI:33308"/>
        <dbReference type="EC" id="3.1.1.1"/>
    </reaction>
</comment>
<comment type="catalytic activity">
    <reaction evidence="11">
        <text>4-methylumbelliferyl acetate + H2O = 4-methylumbelliferone + acetate + H(+)</text>
        <dbReference type="Rhea" id="RHEA:12208"/>
        <dbReference type="ChEBI" id="CHEBI:15377"/>
        <dbReference type="ChEBI" id="CHEBI:15378"/>
        <dbReference type="ChEBI" id="CHEBI:17224"/>
        <dbReference type="ChEBI" id="CHEBI:17763"/>
        <dbReference type="ChEBI" id="CHEBI:30089"/>
        <dbReference type="EC" id="3.1.1.56"/>
    </reaction>
</comment>
<comment type="catalytic activity">
    <reaction evidence="8">
        <text>2-(5Z,8Z,11Z,14Z-eicosatetraenoyl)-glycerol + H2O = glycerol + (5Z,8Z,11Z,14Z)-eicosatetraenoate + H(+)</text>
        <dbReference type="Rhea" id="RHEA:26132"/>
        <dbReference type="ChEBI" id="CHEBI:15377"/>
        <dbReference type="ChEBI" id="CHEBI:15378"/>
        <dbReference type="ChEBI" id="CHEBI:17754"/>
        <dbReference type="ChEBI" id="CHEBI:32395"/>
        <dbReference type="ChEBI" id="CHEBI:52392"/>
    </reaction>
    <physiologicalReaction direction="left-to-right" evidence="15">
        <dbReference type="Rhea" id="RHEA:26133"/>
    </physiologicalReaction>
</comment>
<comment type="catalytic activity">
    <reaction evidence="8">
        <text>prostaglandin E2 1-glyceryl ester + H2O = prostaglandin E2 + glycerol + H(+)</text>
        <dbReference type="Rhea" id="RHEA:48296"/>
        <dbReference type="ChEBI" id="CHEBI:15377"/>
        <dbReference type="ChEBI" id="CHEBI:15378"/>
        <dbReference type="ChEBI" id="CHEBI:17754"/>
        <dbReference type="ChEBI" id="CHEBI:90230"/>
        <dbReference type="ChEBI" id="CHEBI:606564"/>
    </reaction>
    <physiologicalReaction direction="left-to-right" evidence="15">
        <dbReference type="Rhea" id="RHEA:48297"/>
    </physiologicalReaction>
</comment>
<comment type="catalytic activity">
    <reaction evidence="8">
        <text>prostaglandin F2alpha 1-glyceryl ester + H2O = prostaglandin F2alpha + glycerol + H(+)</text>
        <dbReference type="Rhea" id="RHEA:48300"/>
        <dbReference type="ChEBI" id="CHEBI:15377"/>
        <dbReference type="ChEBI" id="CHEBI:15378"/>
        <dbReference type="ChEBI" id="CHEBI:17754"/>
        <dbReference type="ChEBI" id="CHEBI:57404"/>
        <dbReference type="ChEBI" id="CHEBI:90233"/>
    </reaction>
    <physiologicalReaction direction="left-to-right" evidence="15">
        <dbReference type="Rhea" id="RHEA:48301"/>
    </physiologicalReaction>
</comment>
<comment type="biophysicochemical properties">
    <kinetics>
        <KM evidence="11">0.39 mM for cocaine</KM>
        <KM evidence="11">0.15 mM for 4-methylumbelliferyl acetate</KM>
        <KM evidence="11">6.8 mM for heroin</KM>
        <KM evidence="8">46 uM for 2-arachidonoylglycerol</KM>
        <KM evidence="8">750 uM for prostaglandin E2 1-glyceryl ester</KM>
        <KM evidence="8">35 uM for prostaglandin F2alpha 1-glyceryl ester</KM>
        <KM evidence="11">0.13 mM for 6-monoacetylmorphine</KM>
        <text evidence="8">kcat is 43 min(-1), 49 min(-1), 150 min(-1) with 2-arachidonoylglycerol, prostaglandin F2alpha 1-glyceryl ester and prostaglandin E2 1-glyceryl ester as substrates, respectively.</text>
    </kinetics>
</comment>
<comment type="subunit">
    <text evidence="11">Monomer.</text>
</comment>
<comment type="subcellular location">
    <subcellularLocation>
        <location evidence="9">Endoplasmic reticulum lumen</location>
    </subcellularLocation>
</comment>
<comment type="alternative products">
    <event type="alternative splicing"/>
    <event type="alternative initiation"/>
    <isoform>
        <id>O00748-1</id>
        <name>1</name>
        <sequence type="displayed"/>
    </isoform>
    <isoform>
        <id>O00748-2</id>
        <name>2</name>
        <sequence type="described" ref="VSP_010161"/>
    </isoform>
    <isoform>
        <id>O00748-4</id>
        <name>3</name>
        <sequence type="described" ref="VSP_059804"/>
    </isoform>
    <isoform>
        <id>O00748-5</id>
        <name>4</name>
        <sequence type="described" ref="VSP_059804 VSP_010161"/>
    </isoform>
</comment>
<comment type="tissue specificity">
    <text evidence="10">Preferentially expressed in intestine with moderate expression in liver. Within the intestine, highest expression is found in small intestine with lower expression in colon and rectum.</text>
</comment>
<comment type="PTM">
    <text evidence="7 11">Glycosylated.</text>
</comment>
<comment type="miscellaneous">
    <molecule>Isoform 3</molecule>
    <text evidence="13">Probably produced by alternative initiation of isoform 1. Does not contain a signal peptide. The biological function of the extra amino acids in the N-terminus remains to be determined.</text>
</comment>
<comment type="miscellaneous">
    <molecule>Isoform 4</molecule>
    <text evidence="13">Probably produced by alternative initiation of isoform 2. Does not contain a signal peptide. The biological function of the extra amino acids in the N-terminus remains to be determined.</text>
</comment>
<comment type="similarity">
    <text evidence="14">Belongs to the type-B carboxylesterase/lipase family.</text>
</comment>